<protein>
    <recommendedName>
        <fullName evidence="1">Phenylalanine--tRNA ligase beta subunit</fullName>
        <ecNumber evidence="1">6.1.1.20</ecNumber>
    </recommendedName>
    <alternativeName>
        <fullName evidence="1">Phenylalanyl-tRNA synthetase beta subunit</fullName>
        <shortName evidence="1">PheRS</shortName>
    </alternativeName>
</protein>
<feature type="chain" id="PRO_0000126989" description="Phenylalanine--tRNA ligase beta subunit">
    <location>
        <begin position="1"/>
        <end position="791"/>
    </location>
</feature>
<feature type="domain" description="tRNA-binding" evidence="1">
    <location>
        <begin position="39"/>
        <end position="147"/>
    </location>
</feature>
<feature type="domain" description="B5" evidence="1">
    <location>
        <begin position="400"/>
        <end position="475"/>
    </location>
</feature>
<feature type="domain" description="FDX-ACB" evidence="1">
    <location>
        <begin position="697"/>
        <end position="790"/>
    </location>
</feature>
<feature type="binding site" evidence="1">
    <location>
        <position position="453"/>
    </location>
    <ligand>
        <name>Mg(2+)</name>
        <dbReference type="ChEBI" id="CHEBI:18420"/>
        <note>shared with alpha subunit</note>
    </ligand>
</feature>
<feature type="binding site" evidence="1">
    <location>
        <position position="459"/>
    </location>
    <ligand>
        <name>Mg(2+)</name>
        <dbReference type="ChEBI" id="CHEBI:18420"/>
        <note>shared with alpha subunit</note>
    </ligand>
</feature>
<feature type="binding site" evidence="1">
    <location>
        <position position="462"/>
    </location>
    <ligand>
        <name>Mg(2+)</name>
        <dbReference type="ChEBI" id="CHEBI:18420"/>
        <note>shared with alpha subunit</note>
    </ligand>
</feature>
<feature type="binding site" evidence="1">
    <location>
        <position position="463"/>
    </location>
    <ligand>
        <name>Mg(2+)</name>
        <dbReference type="ChEBI" id="CHEBI:18420"/>
        <note>shared with alpha subunit</note>
    </ligand>
</feature>
<accession>Q8P7Z6</accession>
<gene>
    <name evidence="1" type="primary">pheT</name>
    <name type="ordered locus">XCC2458</name>
</gene>
<evidence type="ECO:0000255" key="1">
    <source>
        <dbReference type="HAMAP-Rule" id="MF_00283"/>
    </source>
</evidence>
<sequence length="791" mass="84353">MKFSENWLRSHVPIQASREELAATLTAIGLEVEAVTPLGDALGQVVVARIIAAVRHPEADRLQVCSVDAGQGELLQIVCGAPNARAGLVAPLALVGAQIGELTIKAAKLRGVASNGMLCSAKELGLDSDASGLFELPDDAPVGQALAEYLGLPDASIEIKLTPNRADCFSVRGIAFDVAAACASEVAAFDAAAVAPVSTRTLAVELNAGSEAPRYCGRVIEGIDPAATTPVWMAERLRRSGVRPVSLLVDITQYVMLELGQPMHAFDLDTLHGPVGVRRSRAGEQLALLDGREVTLDDSFLTITDADRPVALAGLMGGLDTRVTNTTRNVFLESAYFDPAAIMGRGRKLGLHTDAGHRFERGVDPALAPQAIEVATRLVLELAGGMPGPVVDAALPHHLPQPASILLRRARIARVLGIQIDDADVARILTALGMHVEAAADGWQVTAPSRRFDIAIEEDLIEELARIHGYDRVPTTLPGGASRIAMPSETQLDELSVRRQLVARELQETINYAFVDAALLERWQLTDGVVPLANPLSAELAVMRPRLLPGLVATLGRNVARQVGRVRLFELGKVFSAAGPGDAPVESQQVAAAVCGDALALQWGEPARKVDFHDLKGDLLALAAASGAVLEFQPSTQPFGHPGRSADIYRDGVCIGWIGQVHPRLAKSLDIDVDVIAFELQLAPLVKRALPRAGELSRYPSMRRDLAFLVPDAVSWAALSASVRTSVGPLLREVQLFDRYVGQGVEPGFKSLAMGLILQDNSRTLTDRDVDAVVADVVAVIEREHRARIRG</sequence>
<keyword id="KW-0030">Aminoacyl-tRNA synthetase</keyword>
<keyword id="KW-0067">ATP-binding</keyword>
<keyword id="KW-0963">Cytoplasm</keyword>
<keyword id="KW-0436">Ligase</keyword>
<keyword id="KW-0460">Magnesium</keyword>
<keyword id="KW-0479">Metal-binding</keyword>
<keyword id="KW-0547">Nucleotide-binding</keyword>
<keyword id="KW-0648">Protein biosynthesis</keyword>
<keyword id="KW-1185">Reference proteome</keyword>
<keyword id="KW-0694">RNA-binding</keyword>
<keyword id="KW-0820">tRNA-binding</keyword>
<organism>
    <name type="scientific">Xanthomonas campestris pv. campestris (strain ATCC 33913 / DSM 3586 / NCPPB 528 / LMG 568 / P 25)</name>
    <dbReference type="NCBI Taxonomy" id="190485"/>
    <lineage>
        <taxon>Bacteria</taxon>
        <taxon>Pseudomonadati</taxon>
        <taxon>Pseudomonadota</taxon>
        <taxon>Gammaproteobacteria</taxon>
        <taxon>Lysobacterales</taxon>
        <taxon>Lysobacteraceae</taxon>
        <taxon>Xanthomonas</taxon>
    </lineage>
</organism>
<dbReference type="EC" id="6.1.1.20" evidence="1"/>
<dbReference type="EMBL" id="AE008922">
    <property type="protein sequence ID" value="AAM41734.1"/>
    <property type="molecule type" value="Genomic_DNA"/>
</dbReference>
<dbReference type="RefSeq" id="NP_637810.1">
    <property type="nucleotide sequence ID" value="NC_003902.1"/>
</dbReference>
<dbReference type="RefSeq" id="WP_011037596.1">
    <property type="nucleotide sequence ID" value="NC_003902.1"/>
</dbReference>
<dbReference type="SMR" id="Q8P7Z6"/>
<dbReference type="STRING" id="190485.XCC2458"/>
<dbReference type="EnsemblBacteria" id="AAM41734">
    <property type="protein sequence ID" value="AAM41734"/>
    <property type="gene ID" value="XCC2458"/>
</dbReference>
<dbReference type="KEGG" id="xcc:XCC2458"/>
<dbReference type="PATRIC" id="fig|190485.4.peg.2621"/>
<dbReference type="eggNOG" id="COG0072">
    <property type="taxonomic scope" value="Bacteria"/>
</dbReference>
<dbReference type="HOGENOM" id="CLU_016891_0_0_6"/>
<dbReference type="OrthoDB" id="9805455at2"/>
<dbReference type="Proteomes" id="UP000001010">
    <property type="component" value="Chromosome"/>
</dbReference>
<dbReference type="GO" id="GO:0009328">
    <property type="term" value="C:phenylalanine-tRNA ligase complex"/>
    <property type="evidence" value="ECO:0000318"/>
    <property type="project" value="GO_Central"/>
</dbReference>
<dbReference type="GO" id="GO:0005524">
    <property type="term" value="F:ATP binding"/>
    <property type="evidence" value="ECO:0007669"/>
    <property type="project" value="UniProtKB-UniRule"/>
</dbReference>
<dbReference type="GO" id="GO:0000287">
    <property type="term" value="F:magnesium ion binding"/>
    <property type="evidence" value="ECO:0007669"/>
    <property type="project" value="UniProtKB-UniRule"/>
</dbReference>
<dbReference type="GO" id="GO:0004826">
    <property type="term" value="F:phenylalanine-tRNA ligase activity"/>
    <property type="evidence" value="ECO:0007669"/>
    <property type="project" value="UniProtKB-UniRule"/>
</dbReference>
<dbReference type="GO" id="GO:0000049">
    <property type="term" value="F:tRNA binding"/>
    <property type="evidence" value="ECO:0007669"/>
    <property type="project" value="UniProtKB-KW"/>
</dbReference>
<dbReference type="GO" id="GO:0006432">
    <property type="term" value="P:phenylalanyl-tRNA aminoacylation"/>
    <property type="evidence" value="ECO:0000318"/>
    <property type="project" value="GO_Central"/>
</dbReference>
<dbReference type="CDD" id="cd00769">
    <property type="entry name" value="PheRS_beta_core"/>
    <property type="match status" value="1"/>
</dbReference>
<dbReference type="CDD" id="cd02796">
    <property type="entry name" value="tRNA_bind_bactPheRS"/>
    <property type="match status" value="1"/>
</dbReference>
<dbReference type="FunFam" id="2.40.50.140:FF:000045">
    <property type="entry name" value="Phenylalanine--tRNA ligase beta subunit"/>
    <property type="match status" value="1"/>
</dbReference>
<dbReference type="FunFam" id="3.30.56.10:FF:000002">
    <property type="entry name" value="Phenylalanine--tRNA ligase beta subunit"/>
    <property type="match status" value="1"/>
</dbReference>
<dbReference type="FunFam" id="3.30.70.380:FF:000001">
    <property type="entry name" value="Phenylalanine--tRNA ligase beta subunit"/>
    <property type="match status" value="1"/>
</dbReference>
<dbReference type="FunFam" id="3.30.930.10:FF:000022">
    <property type="entry name" value="Phenylalanine--tRNA ligase beta subunit"/>
    <property type="match status" value="1"/>
</dbReference>
<dbReference type="FunFam" id="3.50.40.10:FF:000001">
    <property type="entry name" value="Phenylalanine--tRNA ligase beta subunit"/>
    <property type="match status" value="1"/>
</dbReference>
<dbReference type="Gene3D" id="3.30.56.10">
    <property type="match status" value="2"/>
</dbReference>
<dbReference type="Gene3D" id="3.30.930.10">
    <property type="entry name" value="Bira Bifunctional Protein, Domain 2"/>
    <property type="match status" value="1"/>
</dbReference>
<dbReference type="Gene3D" id="3.30.70.380">
    <property type="entry name" value="Ferrodoxin-fold anticodon-binding domain"/>
    <property type="match status" value="1"/>
</dbReference>
<dbReference type="Gene3D" id="2.40.50.140">
    <property type="entry name" value="Nucleic acid-binding proteins"/>
    <property type="match status" value="1"/>
</dbReference>
<dbReference type="Gene3D" id="3.50.40.10">
    <property type="entry name" value="Phenylalanyl-trna Synthetase, Chain B, domain 3"/>
    <property type="match status" value="1"/>
</dbReference>
<dbReference type="HAMAP" id="MF_00283">
    <property type="entry name" value="Phe_tRNA_synth_beta1"/>
    <property type="match status" value="1"/>
</dbReference>
<dbReference type="InterPro" id="IPR045864">
    <property type="entry name" value="aa-tRNA-synth_II/BPL/LPL"/>
</dbReference>
<dbReference type="InterPro" id="IPR005146">
    <property type="entry name" value="B3/B4_tRNA-bd"/>
</dbReference>
<dbReference type="InterPro" id="IPR009061">
    <property type="entry name" value="DNA-bd_dom_put_sf"/>
</dbReference>
<dbReference type="InterPro" id="IPR005121">
    <property type="entry name" value="Fdx_antiC-bd"/>
</dbReference>
<dbReference type="InterPro" id="IPR036690">
    <property type="entry name" value="Fdx_antiC-bd_sf"/>
</dbReference>
<dbReference type="InterPro" id="IPR012340">
    <property type="entry name" value="NA-bd_OB-fold"/>
</dbReference>
<dbReference type="InterPro" id="IPR045060">
    <property type="entry name" value="Phe-tRNA-ligase_IIc_bsu"/>
</dbReference>
<dbReference type="InterPro" id="IPR004532">
    <property type="entry name" value="Phe-tRNA-ligase_IIc_bsu_bact"/>
</dbReference>
<dbReference type="InterPro" id="IPR020825">
    <property type="entry name" value="Phe-tRNA_synthase-like_B3/B4"/>
</dbReference>
<dbReference type="InterPro" id="IPR041616">
    <property type="entry name" value="PheRS_beta_core"/>
</dbReference>
<dbReference type="InterPro" id="IPR002547">
    <property type="entry name" value="tRNA-bd_dom"/>
</dbReference>
<dbReference type="InterPro" id="IPR033714">
    <property type="entry name" value="tRNA_bind_bactPheRS"/>
</dbReference>
<dbReference type="InterPro" id="IPR005147">
    <property type="entry name" value="tRNA_synthase_B5-dom"/>
</dbReference>
<dbReference type="NCBIfam" id="TIGR00472">
    <property type="entry name" value="pheT_bact"/>
    <property type="match status" value="1"/>
</dbReference>
<dbReference type="NCBIfam" id="NF045760">
    <property type="entry name" value="YtpR"/>
    <property type="match status" value="1"/>
</dbReference>
<dbReference type="PANTHER" id="PTHR10947:SF0">
    <property type="entry name" value="PHENYLALANINE--TRNA LIGASE BETA SUBUNIT"/>
    <property type="match status" value="1"/>
</dbReference>
<dbReference type="PANTHER" id="PTHR10947">
    <property type="entry name" value="PHENYLALANYL-TRNA SYNTHETASE BETA CHAIN AND LEUCINE-RICH REPEAT-CONTAINING PROTEIN 47"/>
    <property type="match status" value="1"/>
</dbReference>
<dbReference type="Pfam" id="PF03483">
    <property type="entry name" value="B3_4"/>
    <property type="match status" value="1"/>
</dbReference>
<dbReference type="Pfam" id="PF03484">
    <property type="entry name" value="B5"/>
    <property type="match status" value="1"/>
</dbReference>
<dbReference type="Pfam" id="PF03147">
    <property type="entry name" value="FDX-ACB"/>
    <property type="match status" value="1"/>
</dbReference>
<dbReference type="Pfam" id="PF01588">
    <property type="entry name" value="tRNA_bind"/>
    <property type="match status" value="1"/>
</dbReference>
<dbReference type="Pfam" id="PF17759">
    <property type="entry name" value="tRNA_synthFbeta"/>
    <property type="match status" value="1"/>
</dbReference>
<dbReference type="SMART" id="SM00873">
    <property type="entry name" value="B3_4"/>
    <property type="match status" value="1"/>
</dbReference>
<dbReference type="SMART" id="SM00874">
    <property type="entry name" value="B5"/>
    <property type="match status" value="1"/>
</dbReference>
<dbReference type="SMART" id="SM00896">
    <property type="entry name" value="FDX-ACB"/>
    <property type="match status" value="1"/>
</dbReference>
<dbReference type="SUPFAM" id="SSF54991">
    <property type="entry name" value="Anticodon-binding domain of PheRS"/>
    <property type="match status" value="1"/>
</dbReference>
<dbReference type="SUPFAM" id="SSF55681">
    <property type="entry name" value="Class II aaRS and biotin synthetases"/>
    <property type="match status" value="1"/>
</dbReference>
<dbReference type="SUPFAM" id="SSF50249">
    <property type="entry name" value="Nucleic acid-binding proteins"/>
    <property type="match status" value="1"/>
</dbReference>
<dbReference type="SUPFAM" id="SSF56037">
    <property type="entry name" value="PheT/TilS domain"/>
    <property type="match status" value="1"/>
</dbReference>
<dbReference type="SUPFAM" id="SSF46955">
    <property type="entry name" value="Putative DNA-binding domain"/>
    <property type="match status" value="1"/>
</dbReference>
<dbReference type="PROSITE" id="PS51483">
    <property type="entry name" value="B5"/>
    <property type="match status" value="1"/>
</dbReference>
<dbReference type="PROSITE" id="PS51447">
    <property type="entry name" value="FDX_ACB"/>
    <property type="match status" value="1"/>
</dbReference>
<dbReference type="PROSITE" id="PS50886">
    <property type="entry name" value="TRBD"/>
    <property type="match status" value="1"/>
</dbReference>
<comment type="catalytic activity">
    <reaction evidence="1">
        <text>tRNA(Phe) + L-phenylalanine + ATP = L-phenylalanyl-tRNA(Phe) + AMP + diphosphate + H(+)</text>
        <dbReference type="Rhea" id="RHEA:19413"/>
        <dbReference type="Rhea" id="RHEA-COMP:9668"/>
        <dbReference type="Rhea" id="RHEA-COMP:9699"/>
        <dbReference type="ChEBI" id="CHEBI:15378"/>
        <dbReference type="ChEBI" id="CHEBI:30616"/>
        <dbReference type="ChEBI" id="CHEBI:33019"/>
        <dbReference type="ChEBI" id="CHEBI:58095"/>
        <dbReference type="ChEBI" id="CHEBI:78442"/>
        <dbReference type="ChEBI" id="CHEBI:78531"/>
        <dbReference type="ChEBI" id="CHEBI:456215"/>
        <dbReference type="EC" id="6.1.1.20"/>
    </reaction>
</comment>
<comment type="cofactor">
    <cofactor evidence="1">
        <name>Mg(2+)</name>
        <dbReference type="ChEBI" id="CHEBI:18420"/>
    </cofactor>
    <text evidence="1">Binds 2 magnesium ions per tetramer.</text>
</comment>
<comment type="subunit">
    <text evidence="1">Tetramer of two alpha and two beta subunits.</text>
</comment>
<comment type="subcellular location">
    <subcellularLocation>
        <location evidence="1">Cytoplasm</location>
    </subcellularLocation>
</comment>
<comment type="similarity">
    <text evidence="1">Belongs to the phenylalanyl-tRNA synthetase beta subunit family. Type 1 subfamily.</text>
</comment>
<name>SYFB_XANCP</name>
<reference key="1">
    <citation type="journal article" date="2002" name="Nature">
        <title>Comparison of the genomes of two Xanthomonas pathogens with differing host specificities.</title>
        <authorList>
            <person name="da Silva A.C.R."/>
            <person name="Ferro J.A."/>
            <person name="Reinach F.C."/>
            <person name="Farah C.S."/>
            <person name="Furlan L.R."/>
            <person name="Quaggio R.B."/>
            <person name="Monteiro-Vitorello C.B."/>
            <person name="Van Sluys M.A."/>
            <person name="Almeida N.F. Jr."/>
            <person name="Alves L.M.C."/>
            <person name="do Amaral A.M."/>
            <person name="Bertolini M.C."/>
            <person name="Camargo L.E.A."/>
            <person name="Camarotte G."/>
            <person name="Cannavan F."/>
            <person name="Cardozo J."/>
            <person name="Chambergo F."/>
            <person name="Ciapina L.P."/>
            <person name="Cicarelli R.M.B."/>
            <person name="Coutinho L.L."/>
            <person name="Cursino-Santos J.R."/>
            <person name="El-Dorry H."/>
            <person name="Faria J.B."/>
            <person name="Ferreira A.J.S."/>
            <person name="Ferreira R.C.C."/>
            <person name="Ferro M.I.T."/>
            <person name="Formighieri E.F."/>
            <person name="Franco M.C."/>
            <person name="Greggio C.C."/>
            <person name="Gruber A."/>
            <person name="Katsuyama A.M."/>
            <person name="Kishi L.T."/>
            <person name="Leite R.P."/>
            <person name="Lemos E.G.M."/>
            <person name="Lemos M.V.F."/>
            <person name="Locali E.C."/>
            <person name="Machado M.A."/>
            <person name="Madeira A.M.B.N."/>
            <person name="Martinez-Rossi N.M."/>
            <person name="Martins E.C."/>
            <person name="Meidanis J."/>
            <person name="Menck C.F.M."/>
            <person name="Miyaki C.Y."/>
            <person name="Moon D.H."/>
            <person name="Moreira L.M."/>
            <person name="Novo M.T.M."/>
            <person name="Okura V.K."/>
            <person name="Oliveira M.C."/>
            <person name="Oliveira V.R."/>
            <person name="Pereira H.A."/>
            <person name="Rossi A."/>
            <person name="Sena J.A.D."/>
            <person name="Silva C."/>
            <person name="de Souza R.F."/>
            <person name="Spinola L.A.F."/>
            <person name="Takita M.A."/>
            <person name="Tamura R.E."/>
            <person name="Teixeira E.C."/>
            <person name="Tezza R.I.D."/>
            <person name="Trindade dos Santos M."/>
            <person name="Truffi D."/>
            <person name="Tsai S.M."/>
            <person name="White F.F."/>
            <person name="Setubal J.C."/>
            <person name="Kitajima J.P."/>
        </authorList>
    </citation>
    <scope>NUCLEOTIDE SEQUENCE [LARGE SCALE GENOMIC DNA]</scope>
    <source>
        <strain>ATCC 33913 / DSM 3586 / NCPPB 528 / LMG 568 / P 25</strain>
    </source>
</reference>
<proteinExistence type="inferred from homology"/>